<evidence type="ECO:0000250" key="1"/>
<evidence type="ECO:0000255" key="2">
    <source>
        <dbReference type="PROSITE-ProRule" id="PRU00541"/>
    </source>
</evidence>
<evidence type="ECO:0000255" key="3">
    <source>
        <dbReference type="PROSITE-ProRule" id="PRU00542"/>
    </source>
</evidence>
<evidence type="ECO:0000256" key="4">
    <source>
        <dbReference type="SAM" id="MobiDB-lite"/>
    </source>
</evidence>
<evidence type="ECO:0000305" key="5"/>
<name>HAS1_PICGU</name>
<reference key="1">
    <citation type="journal article" date="2009" name="Nature">
        <title>Evolution of pathogenicity and sexual reproduction in eight Candida genomes.</title>
        <authorList>
            <person name="Butler G."/>
            <person name="Rasmussen M.D."/>
            <person name="Lin M.F."/>
            <person name="Santos M.A.S."/>
            <person name="Sakthikumar S."/>
            <person name="Munro C.A."/>
            <person name="Rheinbay E."/>
            <person name="Grabherr M."/>
            <person name="Forche A."/>
            <person name="Reedy J.L."/>
            <person name="Agrafioti I."/>
            <person name="Arnaud M.B."/>
            <person name="Bates S."/>
            <person name="Brown A.J.P."/>
            <person name="Brunke S."/>
            <person name="Costanzo M.C."/>
            <person name="Fitzpatrick D.A."/>
            <person name="de Groot P.W.J."/>
            <person name="Harris D."/>
            <person name="Hoyer L.L."/>
            <person name="Hube B."/>
            <person name="Klis F.M."/>
            <person name="Kodira C."/>
            <person name="Lennard N."/>
            <person name="Logue M.E."/>
            <person name="Martin R."/>
            <person name="Neiman A.M."/>
            <person name="Nikolaou E."/>
            <person name="Quail M.A."/>
            <person name="Quinn J."/>
            <person name="Santos M.C."/>
            <person name="Schmitzberger F.F."/>
            <person name="Sherlock G."/>
            <person name="Shah P."/>
            <person name="Silverstein K.A.T."/>
            <person name="Skrzypek M.S."/>
            <person name="Soll D."/>
            <person name="Staggs R."/>
            <person name="Stansfield I."/>
            <person name="Stumpf M.P.H."/>
            <person name="Sudbery P.E."/>
            <person name="Srikantha T."/>
            <person name="Zeng Q."/>
            <person name="Berman J."/>
            <person name="Berriman M."/>
            <person name="Heitman J."/>
            <person name="Gow N.A.R."/>
            <person name="Lorenz M.C."/>
            <person name="Birren B.W."/>
            <person name="Kellis M."/>
            <person name="Cuomo C.A."/>
        </authorList>
    </citation>
    <scope>NUCLEOTIDE SEQUENCE [LARGE SCALE GENOMIC DNA]</scope>
    <source>
        <strain>ATCC 6260 / CBS 566 / DSM 6381 / JCM 1539 / NBRC 10279 / NRRL Y-324</strain>
    </source>
</reference>
<protein>
    <recommendedName>
        <fullName>ATP-dependent RNA helicase HAS1</fullName>
        <ecNumber>3.6.4.13</ecNumber>
    </recommendedName>
</protein>
<feature type="chain" id="PRO_0000294627" description="ATP-dependent RNA helicase HAS1">
    <location>
        <begin position="1"/>
        <end position="569"/>
    </location>
</feature>
<feature type="domain" description="Helicase ATP-binding" evidence="2">
    <location>
        <begin position="136"/>
        <end position="312"/>
    </location>
</feature>
<feature type="domain" description="Helicase C-terminal" evidence="3">
    <location>
        <begin position="326"/>
        <end position="496"/>
    </location>
</feature>
<feature type="region of interest" description="Disordered" evidence="4">
    <location>
        <begin position="1"/>
        <end position="57"/>
    </location>
</feature>
<feature type="region of interest" description="Disordered" evidence="4">
    <location>
        <begin position="71"/>
        <end position="110"/>
    </location>
</feature>
<feature type="short sequence motif" description="Q motif">
    <location>
        <begin position="105"/>
        <end position="133"/>
    </location>
</feature>
<feature type="short sequence motif" description="DEAD box">
    <location>
        <begin position="259"/>
        <end position="262"/>
    </location>
</feature>
<feature type="compositionally biased region" description="Acidic residues" evidence="4">
    <location>
        <begin position="34"/>
        <end position="45"/>
    </location>
</feature>
<feature type="compositionally biased region" description="Basic and acidic residues" evidence="4">
    <location>
        <begin position="71"/>
        <end position="85"/>
    </location>
</feature>
<feature type="binding site" evidence="2">
    <location>
        <begin position="149"/>
        <end position="156"/>
    </location>
    <ligand>
        <name>ATP</name>
        <dbReference type="ChEBI" id="CHEBI:30616"/>
    </ligand>
</feature>
<dbReference type="EC" id="3.6.4.13"/>
<dbReference type="EMBL" id="CH408157">
    <property type="protein sequence ID" value="EDK38940.2"/>
    <property type="molecule type" value="Genomic_DNA"/>
</dbReference>
<dbReference type="RefSeq" id="XP_001485309.1">
    <property type="nucleotide sequence ID" value="XM_001485259.1"/>
</dbReference>
<dbReference type="SMR" id="A5DID7"/>
<dbReference type="FunCoup" id="A5DID7">
    <property type="interactions" value="1211"/>
</dbReference>
<dbReference type="STRING" id="294746.A5DID7"/>
<dbReference type="GeneID" id="5126683"/>
<dbReference type="KEGG" id="pgu:PGUG_03038"/>
<dbReference type="VEuPathDB" id="FungiDB:PGUG_03038"/>
<dbReference type="eggNOG" id="KOG0342">
    <property type="taxonomic scope" value="Eukaryota"/>
</dbReference>
<dbReference type="HOGENOM" id="CLU_003041_26_5_1"/>
<dbReference type="InParanoid" id="A5DID7"/>
<dbReference type="OMA" id="LMEFHSQ"/>
<dbReference type="OrthoDB" id="10259640at2759"/>
<dbReference type="Proteomes" id="UP000001997">
    <property type="component" value="Unassembled WGS sequence"/>
</dbReference>
<dbReference type="GO" id="GO:0005635">
    <property type="term" value="C:nuclear envelope"/>
    <property type="evidence" value="ECO:0007669"/>
    <property type="project" value="EnsemblFungi"/>
</dbReference>
<dbReference type="GO" id="GO:0005730">
    <property type="term" value="C:nucleolus"/>
    <property type="evidence" value="ECO:0007669"/>
    <property type="project" value="UniProtKB-SubCell"/>
</dbReference>
<dbReference type="GO" id="GO:0030687">
    <property type="term" value="C:preribosome, large subunit precursor"/>
    <property type="evidence" value="ECO:0007669"/>
    <property type="project" value="EnsemblFungi"/>
</dbReference>
<dbReference type="GO" id="GO:0032040">
    <property type="term" value="C:small-subunit processome"/>
    <property type="evidence" value="ECO:0007669"/>
    <property type="project" value="EnsemblFungi"/>
</dbReference>
<dbReference type="GO" id="GO:0005524">
    <property type="term" value="F:ATP binding"/>
    <property type="evidence" value="ECO:0007669"/>
    <property type="project" value="UniProtKB-KW"/>
</dbReference>
<dbReference type="GO" id="GO:0016887">
    <property type="term" value="F:ATP hydrolysis activity"/>
    <property type="evidence" value="ECO:0007669"/>
    <property type="project" value="RHEA"/>
</dbReference>
<dbReference type="GO" id="GO:0042802">
    <property type="term" value="F:identical protein binding"/>
    <property type="evidence" value="ECO:0007669"/>
    <property type="project" value="EnsemblFungi"/>
</dbReference>
<dbReference type="GO" id="GO:0003723">
    <property type="term" value="F:RNA binding"/>
    <property type="evidence" value="ECO:0007669"/>
    <property type="project" value="UniProtKB-KW"/>
</dbReference>
<dbReference type="GO" id="GO:0003724">
    <property type="term" value="F:RNA helicase activity"/>
    <property type="evidence" value="ECO:0007669"/>
    <property type="project" value="UniProtKB-EC"/>
</dbReference>
<dbReference type="GO" id="GO:0000463">
    <property type="term" value="P:maturation of LSU-rRNA from tricistronic rRNA transcript (SSU-rRNA, 5.8S rRNA, LSU-rRNA)"/>
    <property type="evidence" value="ECO:0007669"/>
    <property type="project" value="EnsemblFungi"/>
</dbReference>
<dbReference type="GO" id="GO:0000462">
    <property type="term" value="P:maturation of SSU-rRNA from tricistronic rRNA transcript (SSU-rRNA, 5.8S rRNA, LSU-rRNA)"/>
    <property type="evidence" value="ECO:0007669"/>
    <property type="project" value="EnsemblFungi"/>
</dbReference>
<dbReference type="GO" id="GO:1990417">
    <property type="term" value="P:snoRNA release from pre-rRNA"/>
    <property type="evidence" value="ECO:0007669"/>
    <property type="project" value="EnsemblFungi"/>
</dbReference>
<dbReference type="CDD" id="cd17942">
    <property type="entry name" value="DEADc_DDX18"/>
    <property type="match status" value="1"/>
</dbReference>
<dbReference type="CDD" id="cd18787">
    <property type="entry name" value="SF2_C_DEAD"/>
    <property type="match status" value="1"/>
</dbReference>
<dbReference type="FunFam" id="3.40.50.300:FF:000379">
    <property type="entry name" value="RNA helicase"/>
    <property type="match status" value="1"/>
</dbReference>
<dbReference type="FunFam" id="3.40.50.300:FF:000460">
    <property type="entry name" value="RNA helicase"/>
    <property type="match status" value="1"/>
</dbReference>
<dbReference type="Gene3D" id="3.40.50.300">
    <property type="entry name" value="P-loop containing nucleotide triphosphate hydrolases"/>
    <property type="match status" value="2"/>
</dbReference>
<dbReference type="InterPro" id="IPR044773">
    <property type="entry name" value="DDX18/Has1_DEADc"/>
</dbReference>
<dbReference type="InterPro" id="IPR011545">
    <property type="entry name" value="DEAD/DEAH_box_helicase_dom"/>
</dbReference>
<dbReference type="InterPro" id="IPR014001">
    <property type="entry name" value="Helicase_ATP-bd"/>
</dbReference>
<dbReference type="InterPro" id="IPR001650">
    <property type="entry name" value="Helicase_C-like"/>
</dbReference>
<dbReference type="InterPro" id="IPR027417">
    <property type="entry name" value="P-loop_NTPase"/>
</dbReference>
<dbReference type="InterPro" id="IPR000629">
    <property type="entry name" value="RNA-helicase_DEAD-box_CS"/>
</dbReference>
<dbReference type="InterPro" id="IPR014014">
    <property type="entry name" value="RNA_helicase_DEAD_Q_motif"/>
</dbReference>
<dbReference type="InterPro" id="IPR025313">
    <property type="entry name" value="SPB4-like_CTE"/>
</dbReference>
<dbReference type="PANTHER" id="PTHR24031">
    <property type="entry name" value="RNA HELICASE"/>
    <property type="match status" value="1"/>
</dbReference>
<dbReference type="Pfam" id="PF13959">
    <property type="entry name" value="CTE_SPB4"/>
    <property type="match status" value="1"/>
</dbReference>
<dbReference type="Pfam" id="PF00270">
    <property type="entry name" value="DEAD"/>
    <property type="match status" value="1"/>
</dbReference>
<dbReference type="Pfam" id="PF00271">
    <property type="entry name" value="Helicase_C"/>
    <property type="match status" value="1"/>
</dbReference>
<dbReference type="SMART" id="SM00487">
    <property type="entry name" value="DEXDc"/>
    <property type="match status" value="1"/>
</dbReference>
<dbReference type="SMART" id="SM01178">
    <property type="entry name" value="DUF4217"/>
    <property type="match status" value="1"/>
</dbReference>
<dbReference type="SMART" id="SM00490">
    <property type="entry name" value="HELICc"/>
    <property type="match status" value="1"/>
</dbReference>
<dbReference type="SUPFAM" id="SSF52540">
    <property type="entry name" value="P-loop containing nucleoside triphosphate hydrolases"/>
    <property type="match status" value="2"/>
</dbReference>
<dbReference type="PROSITE" id="PS00039">
    <property type="entry name" value="DEAD_ATP_HELICASE"/>
    <property type="match status" value="1"/>
</dbReference>
<dbReference type="PROSITE" id="PS51192">
    <property type="entry name" value="HELICASE_ATP_BIND_1"/>
    <property type="match status" value="1"/>
</dbReference>
<dbReference type="PROSITE" id="PS51194">
    <property type="entry name" value="HELICASE_CTER"/>
    <property type="match status" value="1"/>
</dbReference>
<dbReference type="PROSITE" id="PS51195">
    <property type="entry name" value="Q_MOTIF"/>
    <property type="match status" value="1"/>
</dbReference>
<keyword id="KW-0067">ATP-binding</keyword>
<keyword id="KW-0347">Helicase</keyword>
<keyword id="KW-0378">Hydrolase</keyword>
<keyword id="KW-0547">Nucleotide-binding</keyword>
<keyword id="KW-0539">Nucleus</keyword>
<keyword id="KW-1185">Reference proteome</keyword>
<keyword id="KW-0690">Ribosome biogenesis</keyword>
<keyword id="KW-0694">RNA-binding</keyword>
<keyword id="KW-0698">rRNA processing</keyword>
<comment type="function">
    <text>ATP-dependent RNA helicase involved in 40S ribosomal subunit biogenesis. Required for the processing and cleavage of 35S pre-rRNA at sites A0, A1, and A2, leading to mature 18S rRNA.</text>
</comment>
<comment type="catalytic activity">
    <reaction>
        <text>ATP + H2O = ADP + phosphate + H(+)</text>
        <dbReference type="Rhea" id="RHEA:13065"/>
        <dbReference type="ChEBI" id="CHEBI:15377"/>
        <dbReference type="ChEBI" id="CHEBI:15378"/>
        <dbReference type="ChEBI" id="CHEBI:30616"/>
        <dbReference type="ChEBI" id="CHEBI:43474"/>
        <dbReference type="ChEBI" id="CHEBI:456216"/>
        <dbReference type="EC" id="3.6.4.13"/>
    </reaction>
</comment>
<comment type="subunit">
    <text evidence="1">Associates in the nucleolus with the 60S and pre-60S ribosomal subunits.</text>
</comment>
<comment type="subcellular location">
    <subcellularLocation>
        <location evidence="1">Nucleus</location>
        <location evidence="1">Nucleolus</location>
    </subcellularLocation>
</comment>
<comment type="domain">
    <text>The Q motif is unique to and characteristic of the DEAD box family of RNA helicases and controls ATP binding and hydrolysis.</text>
</comment>
<comment type="similarity">
    <text evidence="5">Belongs to the DEAD box helicase family. DDX18/HAS1 subfamily.</text>
</comment>
<sequence length="569" mass="63806">MSKGVKSKTRSESKPKAHKKQSDTNGTKRKRENEEEISSDEEEADNEKLVSELDQNFDDVAELLDGDVADFKEEKKQKKNKEPKTVSENALQPYAQADESTSGSDKFEDLGLSEPTMRAIKDMGFEKMTKVQEKTIPPLLAGRDVLGAAKTGSGKTLAFLIPAIEMLYSLKFKPRNGTGVIVVSPTRELALQIFGVARDLMAHHSQTLGIVIGGANRRQEADKLMKGVNLLIATPGRLLDHLQNTKGFIFKNLKALVIDEADRILEIGFEDEMKQIIKVLPSDERQSMLFSATQTTKVEDLARISLRAGPLYINVVPETEVSTADGLEQGYVTCDSDMRFLLLFSFLRRNIKKKIIVFLSSCNCVKYFGELLNYIDLPVLDLHGKQKQQKRTNTFFEFCNAKQGILICTDVAARGLDIPAVDWIIQFDPPDDPRDYIHRVGRTARGTGGKGKSLMFLTPSELGFLRYLKAANVPLNEYEFPTNKIANIQSQLTKLIKGNYWLHQSAKDGYRAYLQAYASHHLKTVYQIDKLDLVKVAKSFGFDVPPKVNISIGASGKSIEKKHKKQRRQ</sequence>
<gene>
    <name type="primary">HAS1</name>
    <name type="ORF">PGUG_03038</name>
</gene>
<accession>A5DID7</accession>
<proteinExistence type="inferred from homology"/>
<organism>
    <name type="scientific">Meyerozyma guilliermondii (strain ATCC 6260 / CBS 566 / DSM 6381 / JCM 1539 / NBRC 10279 / NRRL Y-324)</name>
    <name type="common">Yeast</name>
    <name type="synonym">Candida guilliermondii</name>
    <dbReference type="NCBI Taxonomy" id="294746"/>
    <lineage>
        <taxon>Eukaryota</taxon>
        <taxon>Fungi</taxon>
        <taxon>Dikarya</taxon>
        <taxon>Ascomycota</taxon>
        <taxon>Saccharomycotina</taxon>
        <taxon>Pichiomycetes</taxon>
        <taxon>Debaryomycetaceae</taxon>
        <taxon>Meyerozyma</taxon>
    </lineage>
</organism>